<proteinExistence type="inferred from homology"/>
<comment type="subunit">
    <text evidence="1">May form a heterooligomeric complex that consists of seven subunits: mnhA2, mnhB2, mnhC2, mnhD2, mnhE2, mnhF2 and mnhG2.</text>
</comment>
<comment type="subcellular location">
    <subcellularLocation>
        <location evidence="3">Cell membrane</location>
        <topology evidence="3">Multi-pass membrane protein</topology>
    </subcellularLocation>
</comment>
<comment type="similarity">
    <text evidence="3">Belongs to the CPA3 antiporters (TC 2.A.63) subunit C family.</text>
</comment>
<organism>
    <name type="scientific">Staphylococcus aureus (strain USA300)</name>
    <dbReference type="NCBI Taxonomy" id="367830"/>
    <lineage>
        <taxon>Bacteria</taxon>
        <taxon>Bacillati</taxon>
        <taxon>Bacillota</taxon>
        <taxon>Bacilli</taxon>
        <taxon>Bacillales</taxon>
        <taxon>Staphylococcaceae</taxon>
        <taxon>Staphylococcus</taxon>
    </lineage>
</organism>
<protein>
    <recommendedName>
        <fullName>Putative antiporter subunit mnhC2</fullName>
    </recommendedName>
    <alternativeName>
        <fullName>Mrp complex subunit C2</fullName>
    </alternativeName>
    <alternativeName>
        <fullName>Putative NADH-ubiquinone oxidoreductase subunit mnhC2</fullName>
    </alternativeName>
</protein>
<evidence type="ECO:0000250" key="1"/>
<evidence type="ECO:0000255" key="2"/>
<evidence type="ECO:0000305" key="3"/>
<name>MNHC2_STAA3</name>
<keyword id="KW-0050">Antiport</keyword>
<keyword id="KW-1003">Cell membrane</keyword>
<keyword id="KW-0406">Ion transport</keyword>
<keyword id="KW-0472">Membrane</keyword>
<keyword id="KW-0812">Transmembrane</keyword>
<keyword id="KW-1133">Transmembrane helix</keyword>
<keyword id="KW-0813">Transport</keyword>
<sequence length="114" mass="12496">MNLILLLVIGFLVFIGTYMILSINLIRIVIGISIYTHAGNLIIMSMGTYGSSRSEPLITGGNQLFVDPLLQAIVLTAIVIGFGMTAFLLVLVYRTYKVTKEDEIEGLRGEDDAK</sequence>
<dbReference type="EMBL" id="CP000255">
    <property type="protein sequence ID" value="ABD22322.1"/>
    <property type="molecule type" value="Genomic_DNA"/>
</dbReference>
<dbReference type="RefSeq" id="WP_001048985.1">
    <property type="nucleotide sequence ID" value="NZ_CP027476.1"/>
</dbReference>
<dbReference type="SMR" id="Q2FJ13"/>
<dbReference type="KEGG" id="saa:SAUSA300_0612"/>
<dbReference type="HOGENOM" id="CLU_082058_3_1_9"/>
<dbReference type="OMA" id="FSIRIML"/>
<dbReference type="Proteomes" id="UP000001939">
    <property type="component" value="Chromosome"/>
</dbReference>
<dbReference type="GO" id="GO:0005886">
    <property type="term" value="C:plasma membrane"/>
    <property type="evidence" value="ECO:0007669"/>
    <property type="project" value="UniProtKB-SubCell"/>
</dbReference>
<dbReference type="GO" id="GO:0015297">
    <property type="term" value="F:antiporter activity"/>
    <property type="evidence" value="ECO:0007669"/>
    <property type="project" value="UniProtKB-KW"/>
</dbReference>
<dbReference type="GO" id="GO:0006811">
    <property type="term" value="P:monoatomic ion transport"/>
    <property type="evidence" value="ECO:0007669"/>
    <property type="project" value="UniProtKB-KW"/>
</dbReference>
<dbReference type="Gene3D" id="1.10.287.3510">
    <property type="match status" value="1"/>
</dbReference>
<dbReference type="InterPro" id="IPR050601">
    <property type="entry name" value="CPA3_antiporter_subunitC"/>
</dbReference>
<dbReference type="InterPro" id="IPR039428">
    <property type="entry name" value="NUOK/Mnh_C1-like"/>
</dbReference>
<dbReference type="NCBIfam" id="NF009303">
    <property type="entry name" value="PRK12660.1"/>
    <property type="match status" value="1"/>
</dbReference>
<dbReference type="PANTHER" id="PTHR34583">
    <property type="entry name" value="ANTIPORTER SUBUNIT MNHC2-RELATED"/>
    <property type="match status" value="1"/>
</dbReference>
<dbReference type="PANTHER" id="PTHR34583:SF2">
    <property type="entry name" value="ANTIPORTER SUBUNIT MNHC2-RELATED"/>
    <property type="match status" value="1"/>
</dbReference>
<dbReference type="Pfam" id="PF00420">
    <property type="entry name" value="Oxidored_q2"/>
    <property type="match status" value="1"/>
</dbReference>
<accession>Q2FJ13</accession>
<feature type="chain" id="PRO_0000372261" description="Putative antiporter subunit mnhC2">
    <location>
        <begin position="1"/>
        <end position="114"/>
    </location>
</feature>
<feature type="transmembrane region" description="Helical" evidence="2">
    <location>
        <begin position="3"/>
        <end position="23"/>
    </location>
</feature>
<feature type="transmembrane region" description="Helical" evidence="2">
    <location>
        <begin position="28"/>
        <end position="48"/>
    </location>
</feature>
<feature type="transmembrane region" description="Helical" evidence="2">
    <location>
        <begin position="72"/>
        <end position="92"/>
    </location>
</feature>
<reference key="1">
    <citation type="journal article" date="2006" name="Lancet">
        <title>Complete genome sequence of USA300, an epidemic clone of community-acquired meticillin-resistant Staphylococcus aureus.</title>
        <authorList>
            <person name="Diep B.A."/>
            <person name="Gill S.R."/>
            <person name="Chang R.F."/>
            <person name="Phan T.H."/>
            <person name="Chen J.H."/>
            <person name="Davidson M.G."/>
            <person name="Lin F."/>
            <person name="Lin J."/>
            <person name="Carleton H.A."/>
            <person name="Mongodin E.F."/>
            <person name="Sensabaugh G.F."/>
            <person name="Perdreau-Remington F."/>
        </authorList>
    </citation>
    <scope>NUCLEOTIDE SEQUENCE [LARGE SCALE GENOMIC DNA]</scope>
    <source>
        <strain>USA300</strain>
    </source>
</reference>
<gene>
    <name type="primary">mnhC2</name>
    <name type="synonym">mrpC2</name>
    <name type="ordered locus">SAUSA300_0612</name>
</gene>